<dbReference type="EC" id="2.7.8.7" evidence="1"/>
<dbReference type="EMBL" id="CU928145">
    <property type="protein sequence ID" value="CAU98722.1"/>
    <property type="molecule type" value="Genomic_DNA"/>
</dbReference>
<dbReference type="RefSeq" id="WP_000986029.1">
    <property type="nucleotide sequence ID" value="NC_011748.1"/>
</dbReference>
<dbReference type="SMR" id="B7LDF6"/>
<dbReference type="GeneID" id="93774528"/>
<dbReference type="KEGG" id="eck:EC55989_2851"/>
<dbReference type="HOGENOM" id="CLU_089696_3_1_6"/>
<dbReference type="Proteomes" id="UP000000746">
    <property type="component" value="Chromosome"/>
</dbReference>
<dbReference type="GO" id="GO:0005737">
    <property type="term" value="C:cytoplasm"/>
    <property type="evidence" value="ECO:0007669"/>
    <property type="project" value="UniProtKB-SubCell"/>
</dbReference>
<dbReference type="GO" id="GO:0008897">
    <property type="term" value="F:holo-[acyl-carrier-protein] synthase activity"/>
    <property type="evidence" value="ECO:0007669"/>
    <property type="project" value="UniProtKB-UniRule"/>
</dbReference>
<dbReference type="GO" id="GO:0000287">
    <property type="term" value="F:magnesium ion binding"/>
    <property type="evidence" value="ECO:0007669"/>
    <property type="project" value="UniProtKB-UniRule"/>
</dbReference>
<dbReference type="GO" id="GO:0006633">
    <property type="term" value="P:fatty acid biosynthetic process"/>
    <property type="evidence" value="ECO:0007669"/>
    <property type="project" value="UniProtKB-UniRule"/>
</dbReference>
<dbReference type="FunFam" id="3.90.470.20:FF:000001">
    <property type="entry name" value="Holo-[acyl-carrier-protein] synthase"/>
    <property type="match status" value="1"/>
</dbReference>
<dbReference type="Gene3D" id="3.90.470.20">
    <property type="entry name" value="4'-phosphopantetheinyl transferase domain"/>
    <property type="match status" value="1"/>
</dbReference>
<dbReference type="HAMAP" id="MF_00101">
    <property type="entry name" value="AcpS"/>
    <property type="match status" value="1"/>
</dbReference>
<dbReference type="InterPro" id="IPR008278">
    <property type="entry name" value="4-PPantetheinyl_Trfase_dom"/>
</dbReference>
<dbReference type="InterPro" id="IPR037143">
    <property type="entry name" value="4-PPantetheinyl_Trfase_dom_sf"/>
</dbReference>
<dbReference type="InterPro" id="IPR002582">
    <property type="entry name" value="ACPS"/>
</dbReference>
<dbReference type="InterPro" id="IPR004568">
    <property type="entry name" value="Ppantetheine-prot_Trfase_dom"/>
</dbReference>
<dbReference type="NCBIfam" id="TIGR00516">
    <property type="entry name" value="acpS"/>
    <property type="match status" value="1"/>
</dbReference>
<dbReference type="NCBIfam" id="TIGR00556">
    <property type="entry name" value="pantethn_trn"/>
    <property type="match status" value="1"/>
</dbReference>
<dbReference type="Pfam" id="PF01648">
    <property type="entry name" value="ACPS"/>
    <property type="match status" value="1"/>
</dbReference>
<dbReference type="SUPFAM" id="SSF56214">
    <property type="entry name" value="4'-phosphopantetheinyl transferase"/>
    <property type="match status" value="1"/>
</dbReference>
<organism>
    <name type="scientific">Escherichia coli (strain 55989 / EAEC)</name>
    <dbReference type="NCBI Taxonomy" id="585055"/>
    <lineage>
        <taxon>Bacteria</taxon>
        <taxon>Pseudomonadati</taxon>
        <taxon>Pseudomonadota</taxon>
        <taxon>Gammaproteobacteria</taxon>
        <taxon>Enterobacterales</taxon>
        <taxon>Enterobacteriaceae</taxon>
        <taxon>Escherichia</taxon>
    </lineage>
</organism>
<proteinExistence type="inferred from homology"/>
<feature type="chain" id="PRO_1000118808" description="Holo-[acyl-carrier-protein] synthase">
    <location>
        <begin position="1"/>
        <end position="126"/>
    </location>
</feature>
<feature type="binding site" evidence="1">
    <location>
        <position position="9"/>
    </location>
    <ligand>
        <name>Mg(2+)</name>
        <dbReference type="ChEBI" id="CHEBI:18420"/>
    </ligand>
</feature>
<feature type="binding site" evidence="1">
    <location>
        <position position="58"/>
    </location>
    <ligand>
        <name>Mg(2+)</name>
        <dbReference type="ChEBI" id="CHEBI:18420"/>
    </ligand>
</feature>
<protein>
    <recommendedName>
        <fullName evidence="1">Holo-[acyl-carrier-protein] synthase</fullName>
        <shortName evidence="1">Holo-ACP synthase</shortName>
        <ecNumber evidence="1">2.7.8.7</ecNumber>
    </recommendedName>
    <alternativeName>
        <fullName evidence="1">4'-phosphopantetheinyl transferase AcpS</fullName>
    </alternativeName>
</protein>
<gene>
    <name evidence="1" type="primary">acpS</name>
    <name type="ordered locus">EC55989_2851</name>
</gene>
<keyword id="KW-0963">Cytoplasm</keyword>
<keyword id="KW-0275">Fatty acid biosynthesis</keyword>
<keyword id="KW-0276">Fatty acid metabolism</keyword>
<keyword id="KW-0444">Lipid biosynthesis</keyword>
<keyword id="KW-0443">Lipid metabolism</keyword>
<keyword id="KW-0460">Magnesium</keyword>
<keyword id="KW-0479">Metal-binding</keyword>
<keyword id="KW-1185">Reference proteome</keyword>
<keyword id="KW-0808">Transferase</keyword>
<sequence>MAILGLGTDIVEIARIEAVIARSGERLARRVLSDNEWAIWKTHHQPVRFLAKRFAVKEAAAKAFGTGIRNGLAFNQFEVFNDELGKPRLRLWGEALKLAEKLGVVNMHVTLADERHYACATVIIES</sequence>
<name>ACPS_ECO55</name>
<accession>B7LDF6</accession>
<reference key="1">
    <citation type="journal article" date="2009" name="PLoS Genet.">
        <title>Organised genome dynamics in the Escherichia coli species results in highly diverse adaptive paths.</title>
        <authorList>
            <person name="Touchon M."/>
            <person name="Hoede C."/>
            <person name="Tenaillon O."/>
            <person name="Barbe V."/>
            <person name="Baeriswyl S."/>
            <person name="Bidet P."/>
            <person name="Bingen E."/>
            <person name="Bonacorsi S."/>
            <person name="Bouchier C."/>
            <person name="Bouvet O."/>
            <person name="Calteau A."/>
            <person name="Chiapello H."/>
            <person name="Clermont O."/>
            <person name="Cruveiller S."/>
            <person name="Danchin A."/>
            <person name="Diard M."/>
            <person name="Dossat C."/>
            <person name="Karoui M.E."/>
            <person name="Frapy E."/>
            <person name="Garry L."/>
            <person name="Ghigo J.M."/>
            <person name="Gilles A.M."/>
            <person name="Johnson J."/>
            <person name="Le Bouguenec C."/>
            <person name="Lescat M."/>
            <person name="Mangenot S."/>
            <person name="Martinez-Jehanne V."/>
            <person name="Matic I."/>
            <person name="Nassif X."/>
            <person name="Oztas S."/>
            <person name="Petit M.A."/>
            <person name="Pichon C."/>
            <person name="Rouy Z."/>
            <person name="Ruf C.S."/>
            <person name="Schneider D."/>
            <person name="Tourret J."/>
            <person name="Vacherie B."/>
            <person name="Vallenet D."/>
            <person name="Medigue C."/>
            <person name="Rocha E.P.C."/>
            <person name="Denamur E."/>
        </authorList>
    </citation>
    <scope>NUCLEOTIDE SEQUENCE [LARGE SCALE GENOMIC DNA]</scope>
    <source>
        <strain>55989 / EAEC</strain>
    </source>
</reference>
<comment type="function">
    <text evidence="1">Transfers the 4'-phosphopantetheine moiety from coenzyme A to a Ser of acyl-carrier-protein.</text>
</comment>
<comment type="catalytic activity">
    <reaction evidence="1">
        <text>apo-[ACP] + CoA = holo-[ACP] + adenosine 3',5'-bisphosphate + H(+)</text>
        <dbReference type="Rhea" id="RHEA:12068"/>
        <dbReference type="Rhea" id="RHEA-COMP:9685"/>
        <dbReference type="Rhea" id="RHEA-COMP:9690"/>
        <dbReference type="ChEBI" id="CHEBI:15378"/>
        <dbReference type="ChEBI" id="CHEBI:29999"/>
        <dbReference type="ChEBI" id="CHEBI:57287"/>
        <dbReference type="ChEBI" id="CHEBI:58343"/>
        <dbReference type="ChEBI" id="CHEBI:64479"/>
        <dbReference type="EC" id="2.7.8.7"/>
    </reaction>
</comment>
<comment type="cofactor">
    <cofactor evidence="1">
        <name>Mg(2+)</name>
        <dbReference type="ChEBI" id="CHEBI:18420"/>
    </cofactor>
</comment>
<comment type="subcellular location">
    <subcellularLocation>
        <location evidence="1">Cytoplasm</location>
    </subcellularLocation>
</comment>
<comment type="similarity">
    <text evidence="1">Belongs to the P-Pant transferase superfamily. AcpS family.</text>
</comment>
<evidence type="ECO:0000255" key="1">
    <source>
        <dbReference type="HAMAP-Rule" id="MF_00101"/>
    </source>
</evidence>